<accession>Q9FSD9</accession>
<reference key="1">
    <citation type="submission" date="1999-10" db="EMBL/GenBank/DDBJ databases">
        <title>A molecular approach to bryophyte systematics.</title>
        <authorList>
            <person name="Capesius I."/>
            <person name="Bloecher R."/>
        </authorList>
    </citation>
    <scope>NUCLEOTIDE SEQUENCE [GENOMIC DNA]</scope>
    <source>
        <tissue>Gametophyte</tissue>
    </source>
</reference>
<organism>
    <name type="scientific">Pellia neesiana</name>
    <name type="common">Liverwort</name>
    <name type="synonym">Pellia epiphylla f. neesiana</name>
    <dbReference type="NCBI Taxonomy" id="70144"/>
    <lineage>
        <taxon>Eukaryota</taxon>
        <taxon>Viridiplantae</taxon>
        <taxon>Streptophyta</taxon>
        <taxon>Embryophyta</taxon>
        <taxon>Marchantiophyta</taxon>
        <taxon>Jungermanniopsida</taxon>
        <taxon>Pelliidae</taxon>
        <taxon>Pelliales</taxon>
        <taxon>Pelliaceae</taxon>
        <taxon>Pellia</taxon>
    </lineage>
</organism>
<geneLocation type="chloroplast"/>
<name>RR4_PELNE</name>
<comment type="function">
    <text evidence="1">One of the primary rRNA binding proteins, it binds directly to 16S rRNA where it nucleates assembly of the body of the 30S subunit.</text>
</comment>
<comment type="function">
    <text evidence="1">With S5 and S12 plays an important role in translational accuracy.</text>
</comment>
<comment type="subunit">
    <text evidence="1">Part of the 30S ribosomal subunit. Contacts protein S5. The interaction surface between S4 and S5 is involved in control of translational fidelity (By similarity).</text>
</comment>
<comment type="subcellular location">
    <subcellularLocation>
        <location>Plastid</location>
        <location>Chloroplast</location>
    </subcellularLocation>
</comment>
<comment type="similarity">
    <text evidence="2">Belongs to the universal ribosomal protein uS4 family.</text>
</comment>
<feature type="chain" id="PRO_0000132646" description="Small ribosomal subunit protein uS4c">
    <location>
        <begin position="1"/>
        <end position="200"/>
    </location>
</feature>
<feature type="domain" description="S4 RNA-binding">
    <location>
        <begin position="90"/>
        <end position="150"/>
    </location>
</feature>
<keyword id="KW-0150">Chloroplast</keyword>
<keyword id="KW-0934">Plastid</keyword>
<keyword id="KW-0687">Ribonucleoprotein</keyword>
<keyword id="KW-0689">Ribosomal protein</keyword>
<keyword id="KW-0694">RNA-binding</keyword>
<keyword id="KW-0699">rRNA-binding</keyword>
<dbReference type="EMBL" id="AJ250456">
    <property type="protein sequence ID" value="CAC14050.1"/>
    <property type="molecule type" value="Genomic_DNA"/>
</dbReference>
<dbReference type="RefSeq" id="YP_010881518.1">
    <property type="nucleotide sequence ID" value="NC_080368.1"/>
</dbReference>
<dbReference type="SMR" id="Q9FSD9"/>
<dbReference type="GeneID" id="82290498"/>
<dbReference type="GO" id="GO:0009507">
    <property type="term" value="C:chloroplast"/>
    <property type="evidence" value="ECO:0007669"/>
    <property type="project" value="UniProtKB-SubCell"/>
</dbReference>
<dbReference type="GO" id="GO:0015935">
    <property type="term" value="C:small ribosomal subunit"/>
    <property type="evidence" value="ECO:0007669"/>
    <property type="project" value="InterPro"/>
</dbReference>
<dbReference type="GO" id="GO:0019843">
    <property type="term" value="F:rRNA binding"/>
    <property type="evidence" value="ECO:0007669"/>
    <property type="project" value="UniProtKB-UniRule"/>
</dbReference>
<dbReference type="GO" id="GO:0003735">
    <property type="term" value="F:structural constituent of ribosome"/>
    <property type="evidence" value="ECO:0007669"/>
    <property type="project" value="InterPro"/>
</dbReference>
<dbReference type="GO" id="GO:0042274">
    <property type="term" value="P:ribosomal small subunit biogenesis"/>
    <property type="evidence" value="ECO:0007669"/>
    <property type="project" value="TreeGrafter"/>
</dbReference>
<dbReference type="GO" id="GO:0006412">
    <property type="term" value="P:translation"/>
    <property type="evidence" value="ECO:0007669"/>
    <property type="project" value="UniProtKB-UniRule"/>
</dbReference>
<dbReference type="CDD" id="cd00165">
    <property type="entry name" value="S4"/>
    <property type="match status" value="1"/>
</dbReference>
<dbReference type="FunFam" id="1.10.1050.10:FF:000002">
    <property type="entry name" value="30S ribosomal protein S4, chloroplastic"/>
    <property type="match status" value="1"/>
</dbReference>
<dbReference type="FunFam" id="3.10.290.10:FF:000081">
    <property type="entry name" value="30S ribosomal protein S4, chloroplastic"/>
    <property type="match status" value="1"/>
</dbReference>
<dbReference type="Gene3D" id="1.10.1050.10">
    <property type="entry name" value="Ribosomal Protein S4 Delta 41, Chain A, domain 1"/>
    <property type="match status" value="1"/>
</dbReference>
<dbReference type="Gene3D" id="3.10.290.10">
    <property type="entry name" value="RNA-binding S4 domain"/>
    <property type="match status" value="1"/>
</dbReference>
<dbReference type="HAMAP" id="MF_01306_B">
    <property type="entry name" value="Ribosomal_uS4_B"/>
    <property type="match status" value="1"/>
</dbReference>
<dbReference type="InterPro" id="IPR022801">
    <property type="entry name" value="Ribosomal_uS4"/>
</dbReference>
<dbReference type="InterPro" id="IPR005709">
    <property type="entry name" value="Ribosomal_uS4_bac-type"/>
</dbReference>
<dbReference type="InterPro" id="IPR018079">
    <property type="entry name" value="Ribosomal_uS4_CS"/>
</dbReference>
<dbReference type="InterPro" id="IPR001912">
    <property type="entry name" value="Ribosomal_uS4_N"/>
</dbReference>
<dbReference type="InterPro" id="IPR002942">
    <property type="entry name" value="S4_RNA-bd"/>
</dbReference>
<dbReference type="InterPro" id="IPR036986">
    <property type="entry name" value="S4_RNA-bd_sf"/>
</dbReference>
<dbReference type="NCBIfam" id="NF003717">
    <property type="entry name" value="PRK05327.1"/>
    <property type="match status" value="1"/>
</dbReference>
<dbReference type="NCBIfam" id="TIGR01017">
    <property type="entry name" value="rpsD_bact"/>
    <property type="match status" value="1"/>
</dbReference>
<dbReference type="PANTHER" id="PTHR11831">
    <property type="entry name" value="30S 40S RIBOSOMAL PROTEIN"/>
    <property type="match status" value="1"/>
</dbReference>
<dbReference type="PANTHER" id="PTHR11831:SF4">
    <property type="entry name" value="SMALL RIBOSOMAL SUBUNIT PROTEIN US4M"/>
    <property type="match status" value="1"/>
</dbReference>
<dbReference type="Pfam" id="PF00163">
    <property type="entry name" value="Ribosomal_S4"/>
    <property type="match status" value="1"/>
</dbReference>
<dbReference type="Pfam" id="PF01479">
    <property type="entry name" value="S4"/>
    <property type="match status" value="1"/>
</dbReference>
<dbReference type="SMART" id="SM01390">
    <property type="entry name" value="Ribosomal_S4"/>
    <property type="match status" value="1"/>
</dbReference>
<dbReference type="SMART" id="SM00363">
    <property type="entry name" value="S4"/>
    <property type="match status" value="1"/>
</dbReference>
<dbReference type="SUPFAM" id="SSF55174">
    <property type="entry name" value="Alpha-L RNA-binding motif"/>
    <property type="match status" value="1"/>
</dbReference>
<dbReference type="PROSITE" id="PS00632">
    <property type="entry name" value="RIBOSOMAL_S4"/>
    <property type="match status" value="1"/>
</dbReference>
<dbReference type="PROSITE" id="PS50889">
    <property type="entry name" value="S4"/>
    <property type="match status" value="1"/>
</dbReference>
<sequence>MSRYRGPRTKIIRRLGALPGLTSKILELESGYIGQSTPNKKVSQYRIRLEEKQKLRFHYGLTERQLLKYVRIARKAKGSTGQILSQTLEMRLDNIIFRLGMSPTIPGARQLVNHRHILINDNTVDIPSYNCEPKDVITVNNRKESVIIKNMDSSRKPKVPNHLTFDSIRFRGSVNQTIDRECIDLKINELLVVEYYSRQV</sequence>
<proteinExistence type="inferred from homology"/>
<evidence type="ECO:0000250" key="1"/>
<evidence type="ECO:0000305" key="2"/>
<protein>
    <recommendedName>
        <fullName evidence="2">Small ribosomal subunit protein uS4c</fullName>
    </recommendedName>
    <alternativeName>
        <fullName>30S ribosomal protein S4, chloroplastic</fullName>
    </alternativeName>
</protein>
<gene>
    <name type="primary">rps4</name>
</gene>